<sequence>MSETVERHEFGAEVGRLLDLVVHALYSDREIFLRELVANAADATDRRRFEALTNEALALPSDARVLIAPDKAARTLTISDAGIGMSKEDLAQNLGTIARSGTRAFSQALGERAAEGGEDQRPSLIGQFGVGFYSAFMVADRVTVTSRRAGSEEAWTWASDGKGSYTLEPASREQPGTDIVLHMKEDADEYLESYRLDHVVRKWADNIAVPIAIRDAEGKEEAANRGTALWRKPKSEITEEQYKEFYRTVSHGFDEPWATLHWRAEGALEFTGLLFVPSMKPFMPMEDDRRSKVRLHVRRMFITDEAELLPNWLRFVHGVVDTDDLPLNVSREMLQSTPTLQKIRRAVTTRVINELSSRSKNAEKAEEYQKFFENFGPVLKEGIYEDFERRGEIAPLLRFRSSTEGGWTSLPEYVARMKPEQEAIYYLVADDVEALKNSAQLEGFRARGVEVLLLSDHVDAFWPEQLGKFEDKPLRSVTQGSADLAKLKPEGETAEAAPALDTLVAALKLALEPDVSDVRTTDRLVDSAVVLATSGMGPDLQMQRLLRRAGRGFGGSAPILEINPRHALIRSLNERAEAGEDLKAEAGTLLDLARVQDGDTPRDPVAFARAVAAALAGTAAKPAESA</sequence>
<name>HTPG_METEP</name>
<organism>
    <name type="scientific">Methylorubrum extorquens (strain PA1)</name>
    <name type="common">Methylobacterium extorquens</name>
    <dbReference type="NCBI Taxonomy" id="419610"/>
    <lineage>
        <taxon>Bacteria</taxon>
        <taxon>Pseudomonadati</taxon>
        <taxon>Pseudomonadota</taxon>
        <taxon>Alphaproteobacteria</taxon>
        <taxon>Hyphomicrobiales</taxon>
        <taxon>Methylobacteriaceae</taxon>
        <taxon>Methylorubrum</taxon>
    </lineage>
</organism>
<accession>A9W1H7</accession>
<proteinExistence type="inferred from homology"/>
<feature type="chain" id="PRO_1000127029" description="Chaperone protein HtpG">
    <location>
        <begin position="1"/>
        <end position="626"/>
    </location>
</feature>
<feature type="region of interest" description="A; substrate-binding" evidence="1">
    <location>
        <begin position="1"/>
        <end position="331"/>
    </location>
</feature>
<feature type="region of interest" description="B" evidence="1">
    <location>
        <begin position="332"/>
        <end position="544"/>
    </location>
</feature>
<feature type="region of interest" description="C" evidence="1">
    <location>
        <begin position="545"/>
        <end position="626"/>
    </location>
</feature>
<evidence type="ECO:0000255" key="1">
    <source>
        <dbReference type="HAMAP-Rule" id="MF_00505"/>
    </source>
</evidence>
<reference key="1">
    <citation type="submission" date="2007-12" db="EMBL/GenBank/DDBJ databases">
        <title>Complete sequence of Methylobacterium extorquens PA1.</title>
        <authorList>
            <consortium name="US DOE Joint Genome Institute"/>
            <person name="Copeland A."/>
            <person name="Lucas S."/>
            <person name="Lapidus A."/>
            <person name="Barry K."/>
            <person name="Glavina del Rio T."/>
            <person name="Dalin E."/>
            <person name="Tice H."/>
            <person name="Pitluck S."/>
            <person name="Saunders E."/>
            <person name="Brettin T."/>
            <person name="Bruce D."/>
            <person name="Detter J.C."/>
            <person name="Han C."/>
            <person name="Schmutz J."/>
            <person name="Larimer F."/>
            <person name="Land M."/>
            <person name="Hauser L."/>
            <person name="Kyrpides N."/>
            <person name="Kim E."/>
            <person name="Marx C."/>
            <person name="Richardson P."/>
        </authorList>
    </citation>
    <scope>NUCLEOTIDE SEQUENCE [LARGE SCALE GENOMIC DNA]</scope>
    <source>
        <strain>PA1</strain>
    </source>
</reference>
<protein>
    <recommendedName>
        <fullName evidence="1">Chaperone protein HtpG</fullName>
    </recommendedName>
    <alternativeName>
        <fullName evidence="1">Heat shock protein HtpG</fullName>
    </alternativeName>
    <alternativeName>
        <fullName evidence="1">High temperature protein G</fullName>
    </alternativeName>
</protein>
<gene>
    <name evidence="1" type="primary">htpG</name>
    <name type="ordered locus">Mext_1028</name>
</gene>
<dbReference type="EMBL" id="CP000908">
    <property type="protein sequence ID" value="ABY29433.1"/>
    <property type="molecule type" value="Genomic_DNA"/>
</dbReference>
<dbReference type="RefSeq" id="WP_012252718.1">
    <property type="nucleotide sequence ID" value="NC_010172.1"/>
</dbReference>
<dbReference type="SMR" id="A9W1H7"/>
<dbReference type="KEGG" id="mex:Mext_1028"/>
<dbReference type="eggNOG" id="COG0326">
    <property type="taxonomic scope" value="Bacteria"/>
</dbReference>
<dbReference type="HOGENOM" id="CLU_006684_3_0_5"/>
<dbReference type="BioCyc" id="MEXT419610:MEXT_RS05160-MONOMER"/>
<dbReference type="GO" id="GO:0005737">
    <property type="term" value="C:cytoplasm"/>
    <property type="evidence" value="ECO:0007669"/>
    <property type="project" value="UniProtKB-SubCell"/>
</dbReference>
<dbReference type="GO" id="GO:0005524">
    <property type="term" value="F:ATP binding"/>
    <property type="evidence" value="ECO:0007669"/>
    <property type="project" value="UniProtKB-UniRule"/>
</dbReference>
<dbReference type="GO" id="GO:0016887">
    <property type="term" value="F:ATP hydrolysis activity"/>
    <property type="evidence" value="ECO:0007669"/>
    <property type="project" value="InterPro"/>
</dbReference>
<dbReference type="GO" id="GO:0140662">
    <property type="term" value="F:ATP-dependent protein folding chaperone"/>
    <property type="evidence" value="ECO:0007669"/>
    <property type="project" value="InterPro"/>
</dbReference>
<dbReference type="GO" id="GO:0051082">
    <property type="term" value="F:unfolded protein binding"/>
    <property type="evidence" value="ECO:0007669"/>
    <property type="project" value="UniProtKB-UniRule"/>
</dbReference>
<dbReference type="CDD" id="cd16927">
    <property type="entry name" value="HATPase_Hsp90-like"/>
    <property type="match status" value="1"/>
</dbReference>
<dbReference type="FunFam" id="3.30.565.10:FF:000357">
    <property type="entry name" value="Heat shock protein HSP 90-beta"/>
    <property type="match status" value="1"/>
</dbReference>
<dbReference type="Gene3D" id="3.30.230.80">
    <property type="match status" value="1"/>
</dbReference>
<dbReference type="Gene3D" id="3.40.50.11260">
    <property type="match status" value="1"/>
</dbReference>
<dbReference type="Gene3D" id="1.20.120.790">
    <property type="entry name" value="Heat shock protein 90, C-terminal domain"/>
    <property type="match status" value="1"/>
</dbReference>
<dbReference type="Gene3D" id="3.30.565.10">
    <property type="entry name" value="Histidine kinase-like ATPase, C-terminal domain"/>
    <property type="match status" value="1"/>
</dbReference>
<dbReference type="HAMAP" id="MF_00505">
    <property type="entry name" value="HSP90"/>
    <property type="match status" value="1"/>
</dbReference>
<dbReference type="InterPro" id="IPR036890">
    <property type="entry name" value="HATPase_C_sf"/>
</dbReference>
<dbReference type="InterPro" id="IPR019805">
    <property type="entry name" value="Heat_shock_protein_90_CS"/>
</dbReference>
<dbReference type="InterPro" id="IPR037196">
    <property type="entry name" value="HSP90_C"/>
</dbReference>
<dbReference type="InterPro" id="IPR001404">
    <property type="entry name" value="Hsp90_fam"/>
</dbReference>
<dbReference type="InterPro" id="IPR020575">
    <property type="entry name" value="Hsp90_N"/>
</dbReference>
<dbReference type="InterPro" id="IPR020568">
    <property type="entry name" value="Ribosomal_Su5_D2-typ_SF"/>
</dbReference>
<dbReference type="NCBIfam" id="NF003555">
    <property type="entry name" value="PRK05218.1"/>
    <property type="match status" value="1"/>
</dbReference>
<dbReference type="PANTHER" id="PTHR11528">
    <property type="entry name" value="HEAT SHOCK PROTEIN 90 FAMILY MEMBER"/>
    <property type="match status" value="1"/>
</dbReference>
<dbReference type="Pfam" id="PF13589">
    <property type="entry name" value="HATPase_c_3"/>
    <property type="match status" value="1"/>
</dbReference>
<dbReference type="Pfam" id="PF00183">
    <property type="entry name" value="HSP90"/>
    <property type="match status" value="1"/>
</dbReference>
<dbReference type="PIRSF" id="PIRSF002583">
    <property type="entry name" value="Hsp90"/>
    <property type="match status" value="1"/>
</dbReference>
<dbReference type="PRINTS" id="PR00775">
    <property type="entry name" value="HEATSHOCK90"/>
</dbReference>
<dbReference type="SUPFAM" id="SSF55874">
    <property type="entry name" value="ATPase domain of HSP90 chaperone/DNA topoisomerase II/histidine kinase"/>
    <property type="match status" value="1"/>
</dbReference>
<dbReference type="SUPFAM" id="SSF110942">
    <property type="entry name" value="HSP90 C-terminal domain"/>
    <property type="match status" value="1"/>
</dbReference>
<dbReference type="SUPFAM" id="SSF54211">
    <property type="entry name" value="Ribosomal protein S5 domain 2-like"/>
    <property type="match status" value="1"/>
</dbReference>
<dbReference type="PROSITE" id="PS00298">
    <property type="entry name" value="HSP90"/>
    <property type="match status" value="1"/>
</dbReference>
<comment type="function">
    <text evidence="1">Molecular chaperone. Has ATPase activity.</text>
</comment>
<comment type="subunit">
    <text evidence="1">Homodimer.</text>
</comment>
<comment type="subcellular location">
    <subcellularLocation>
        <location evidence="1">Cytoplasm</location>
    </subcellularLocation>
</comment>
<comment type="similarity">
    <text evidence="1">Belongs to the heat shock protein 90 family.</text>
</comment>
<keyword id="KW-0067">ATP-binding</keyword>
<keyword id="KW-0143">Chaperone</keyword>
<keyword id="KW-0963">Cytoplasm</keyword>
<keyword id="KW-0547">Nucleotide-binding</keyword>
<keyword id="KW-0346">Stress response</keyword>